<proteinExistence type="evidence at transcript level"/>
<sequence>MAWDMCSQDSVWSDIECAALVGEDQPLCPDLPELDLSELDVNDLDTDSFLGGLKWCSDQSEIISNQYNNEPANIFEKIDEENEANLLAVLTETLDSLPVDEDGLPSFDALTDGDVTTDNEASPSSMPDGTPPPQEAEEPSLLKKLLLAPANTQLSYNECSGLSTQNHANHTHRIRTNPAIVKTENSWSNKAKSICQQQKPQRRPCSELLKYLTTNDDPPHTKPTENRNSSRDKCASKKKSHTQPQSQHAQAKPTTLSLPLTPESPNDPKGSPFENKTIERTLSVELSGTAGLTPPTTPPHKANQDNPFKASPKLKPSCKTVVPPPTKRARYSECSGTQGSHSTKKGPEQSELYAQLSKSSVLSRGHEERKTKRPSLRLFGDHDYCQSVNSKTDILINISQELQDSRQLDFKDASCDWQGHICSSTDSSQCYLRETLEASKQVSPCSTRKQLQDQEIRAELNKHFGHPSQAVFDDKVDKTSELRDGNFSNEQFSKLPVFINSGLAMDGLFDDSEDENDKLSYPWDGTQSYSLFDVSPSCSSFNSPCRDSVSPPKSLFSQRPQRMRSRSRSFSRHRSCSRSPYSRSRSRSPGSRSSSRSCYYYESSHYRHRTHRNSPLYVRSRSRSPYSRRPRYDSYEANEHERLKRDEYRREYEKRESERAKQRERQKQKAIEERRVIYVGKIRPDTTRTELRDRFEVFGEIEECTVNLRDDGDSYGFITYRYTCDAFAALENGYTLRRSNETDFELYFCGRKQFFKSNYADLDSNSDDFDPASTKSKYDSLDFDSLLKEAQRSLRR</sequence>
<evidence type="ECO:0000250" key="1">
    <source>
        <dbReference type="UniProtKB" id="O70343"/>
    </source>
</evidence>
<evidence type="ECO:0000250" key="2">
    <source>
        <dbReference type="UniProtKB" id="Q9UBK2"/>
    </source>
</evidence>
<evidence type="ECO:0000255" key="3">
    <source>
        <dbReference type="PROSITE-ProRule" id="PRU00176"/>
    </source>
</evidence>
<evidence type="ECO:0000256" key="4">
    <source>
        <dbReference type="SAM" id="MobiDB-lite"/>
    </source>
</evidence>
<evidence type="ECO:0000269" key="5">
    <source>
    </source>
</evidence>
<evidence type="ECO:0000269" key="6">
    <source>
    </source>
</evidence>
<evidence type="ECO:0000305" key="7"/>
<dbReference type="EMBL" id="AB025784">
    <property type="protein sequence ID" value="BAA88982.1"/>
    <property type="molecule type" value="mRNA"/>
</dbReference>
<dbReference type="EMBL" id="AY237127">
    <property type="protein sequence ID" value="AAO89279.1"/>
    <property type="molecule type" value="mRNA"/>
</dbReference>
<dbReference type="PIR" id="JC7355">
    <property type="entry name" value="JC7355"/>
</dbReference>
<dbReference type="RefSeq" id="NP_112637.1">
    <property type="nucleotide sequence ID" value="NM_031347.1"/>
</dbReference>
<dbReference type="SMR" id="Q9QYK2"/>
<dbReference type="FunCoup" id="Q9QYK2">
    <property type="interactions" value="509"/>
</dbReference>
<dbReference type="STRING" id="10116.ENSRNOP00000006071"/>
<dbReference type="GlyGen" id="Q9QYK2">
    <property type="glycosylation" value="1 site, 1 O-linked glycan (1 site)"/>
</dbReference>
<dbReference type="iPTMnet" id="Q9QYK2"/>
<dbReference type="PhosphoSitePlus" id="Q9QYK2"/>
<dbReference type="PaxDb" id="10116-ENSRNOP00000006071"/>
<dbReference type="GeneID" id="83516"/>
<dbReference type="KEGG" id="rno:83516"/>
<dbReference type="AGR" id="RGD:620925"/>
<dbReference type="CTD" id="10891"/>
<dbReference type="RGD" id="620925">
    <property type="gene designation" value="Ppargc1a"/>
</dbReference>
<dbReference type="VEuPathDB" id="HostDB:ENSRNOG00000004473"/>
<dbReference type="eggNOG" id="ENOG502QSXU">
    <property type="taxonomic scope" value="Eukaryota"/>
</dbReference>
<dbReference type="HOGENOM" id="CLU_020104_0_0_1"/>
<dbReference type="InParanoid" id="Q9QYK2"/>
<dbReference type="PhylomeDB" id="Q9QYK2"/>
<dbReference type="TreeFam" id="TF343068"/>
<dbReference type="Reactome" id="R-RNO-9841922">
    <property type="pathway name" value="MLL4 and MLL3 complexes regulate expression of PPARG target genes in adipogenesis and hepatic steatosis"/>
</dbReference>
<dbReference type="PRO" id="PR:Q9QYK2"/>
<dbReference type="Proteomes" id="UP000002494">
    <property type="component" value="Chromosome 14"/>
</dbReference>
<dbReference type="Bgee" id="ENSRNOG00000004473">
    <property type="expression patterns" value="Expressed in adult mammalian kidney and 16 other cell types or tissues"/>
</dbReference>
<dbReference type="GO" id="GO:0097440">
    <property type="term" value="C:apical dendrite"/>
    <property type="evidence" value="ECO:0000314"/>
    <property type="project" value="RGD"/>
</dbReference>
<dbReference type="GO" id="GO:0022626">
    <property type="term" value="C:cytosolic ribosome"/>
    <property type="evidence" value="ECO:0000314"/>
    <property type="project" value="RGD"/>
</dbReference>
<dbReference type="GO" id="GO:0000791">
    <property type="term" value="C:euchromatin"/>
    <property type="evidence" value="ECO:0000314"/>
    <property type="project" value="RGD"/>
</dbReference>
<dbReference type="GO" id="GO:0043025">
    <property type="term" value="C:neuronal cell body"/>
    <property type="evidence" value="ECO:0000314"/>
    <property type="project" value="RGD"/>
</dbReference>
<dbReference type="GO" id="GO:0005634">
    <property type="term" value="C:nucleus"/>
    <property type="evidence" value="ECO:0000266"/>
    <property type="project" value="RGD"/>
</dbReference>
<dbReference type="GO" id="GO:0016605">
    <property type="term" value="C:PML body"/>
    <property type="evidence" value="ECO:0007669"/>
    <property type="project" value="UniProtKB-SubCell"/>
</dbReference>
<dbReference type="GO" id="GO:0043014">
    <property type="term" value="F:alpha-tubulin binding"/>
    <property type="evidence" value="ECO:0000314"/>
    <property type="project" value="RGD"/>
</dbReference>
<dbReference type="GO" id="GO:0003682">
    <property type="term" value="F:chromatin binding"/>
    <property type="evidence" value="ECO:0000314"/>
    <property type="project" value="RGD"/>
</dbReference>
<dbReference type="GO" id="GO:0031490">
    <property type="term" value="F:chromatin DNA binding"/>
    <property type="evidence" value="ECO:0000250"/>
    <property type="project" value="UniProtKB"/>
</dbReference>
<dbReference type="GO" id="GO:0003677">
    <property type="term" value="F:DNA binding"/>
    <property type="evidence" value="ECO:0000250"/>
    <property type="project" value="UniProtKB"/>
</dbReference>
<dbReference type="GO" id="GO:0106222">
    <property type="term" value="F:lncRNA binding"/>
    <property type="evidence" value="ECO:0000266"/>
    <property type="project" value="RGD"/>
</dbReference>
<dbReference type="GO" id="GO:0030331">
    <property type="term" value="F:nuclear estrogen receptor binding"/>
    <property type="evidence" value="ECO:0000353"/>
    <property type="project" value="RGD"/>
</dbReference>
<dbReference type="GO" id="GO:0016922">
    <property type="term" value="F:nuclear receptor binding"/>
    <property type="evidence" value="ECO:0000266"/>
    <property type="project" value="RGD"/>
</dbReference>
<dbReference type="GO" id="GO:0042975">
    <property type="term" value="F:peroxisome proliferator activated receptor binding"/>
    <property type="evidence" value="ECO:0000353"/>
    <property type="project" value="RGD"/>
</dbReference>
<dbReference type="GO" id="GO:1990841">
    <property type="term" value="F:promoter-specific chromatin binding"/>
    <property type="evidence" value="ECO:0000314"/>
    <property type="project" value="RGD"/>
</dbReference>
<dbReference type="GO" id="GO:0061629">
    <property type="term" value="F:RNA polymerase II-specific DNA-binding transcription factor binding"/>
    <property type="evidence" value="ECO:0000266"/>
    <property type="project" value="RGD"/>
</dbReference>
<dbReference type="GO" id="GO:0043565">
    <property type="term" value="F:sequence-specific DNA binding"/>
    <property type="evidence" value="ECO:0000250"/>
    <property type="project" value="UniProtKB"/>
</dbReference>
<dbReference type="GO" id="GO:0003713">
    <property type="term" value="F:transcription coactivator activity"/>
    <property type="evidence" value="ECO:0000314"/>
    <property type="project" value="RGD"/>
</dbReference>
<dbReference type="GO" id="GO:0003712">
    <property type="term" value="F:transcription coregulator activity"/>
    <property type="evidence" value="ECO:0000266"/>
    <property type="project" value="RGD"/>
</dbReference>
<dbReference type="GO" id="GO:0031625">
    <property type="term" value="F:ubiquitin protein ligase binding"/>
    <property type="evidence" value="ECO:0000266"/>
    <property type="project" value="RGD"/>
</dbReference>
<dbReference type="GO" id="GO:1990845">
    <property type="term" value="P:adaptive thermogenesis"/>
    <property type="evidence" value="ECO:0000270"/>
    <property type="project" value="RGD"/>
</dbReference>
<dbReference type="GO" id="GO:0060612">
    <property type="term" value="P:adipose tissue development"/>
    <property type="evidence" value="ECO:0000266"/>
    <property type="project" value="RGD"/>
</dbReference>
<dbReference type="GO" id="GO:0008209">
    <property type="term" value="P:androgen metabolic process"/>
    <property type="evidence" value="ECO:0000270"/>
    <property type="project" value="RGD"/>
</dbReference>
<dbReference type="GO" id="GO:0000422">
    <property type="term" value="P:autophagy of mitochondrion"/>
    <property type="evidence" value="ECO:0000270"/>
    <property type="project" value="RGD"/>
</dbReference>
<dbReference type="GO" id="GO:0071313">
    <property type="term" value="P:cellular response to caffeine"/>
    <property type="evidence" value="ECO:0000270"/>
    <property type="project" value="RGD"/>
</dbReference>
<dbReference type="GO" id="GO:0071392">
    <property type="term" value="P:cellular response to estradiol stimulus"/>
    <property type="evidence" value="ECO:0000270"/>
    <property type="project" value="RGD"/>
</dbReference>
<dbReference type="GO" id="GO:0071398">
    <property type="term" value="P:cellular response to fatty acid"/>
    <property type="evidence" value="ECO:0000270"/>
    <property type="project" value="RGD"/>
</dbReference>
<dbReference type="GO" id="GO:0071372">
    <property type="term" value="P:cellular response to follicle-stimulating hormone stimulus"/>
    <property type="evidence" value="ECO:0000314"/>
    <property type="project" value="RGD"/>
</dbReference>
<dbReference type="GO" id="GO:0071332">
    <property type="term" value="P:cellular response to fructose stimulus"/>
    <property type="evidence" value="ECO:0000270"/>
    <property type="project" value="RGD"/>
</dbReference>
<dbReference type="GO" id="GO:0071333">
    <property type="term" value="P:cellular response to glucose stimulus"/>
    <property type="evidence" value="ECO:0000270"/>
    <property type="project" value="RGD"/>
</dbReference>
<dbReference type="GO" id="GO:0071456">
    <property type="term" value="P:cellular response to hypoxia"/>
    <property type="evidence" value="ECO:0000270"/>
    <property type="project" value="RGD"/>
</dbReference>
<dbReference type="GO" id="GO:0071354">
    <property type="term" value="P:cellular response to interleukin-6"/>
    <property type="evidence" value="ECO:0000270"/>
    <property type="project" value="RGD"/>
</dbReference>
<dbReference type="GO" id="GO:1904637">
    <property type="term" value="P:cellular response to ionomycin"/>
    <property type="evidence" value="ECO:0000270"/>
    <property type="project" value="RGD"/>
</dbReference>
<dbReference type="GO" id="GO:0071222">
    <property type="term" value="P:cellular response to lipopolysaccharide"/>
    <property type="evidence" value="ECO:0000270"/>
    <property type="project" value="RGD"/>
</dbReference>
<dbReference type="GO" id="GO:0071250">
    <property type="term" value="P:cellular response to nitrite"/>
    <property type="evidence" value="ECO:0000270"/>
    <property type="project" value="RGD"/>
</dbReference>
<dbReference type="GO" id="GO:0034599">
    <property type="term" value="P:cellular response to oxidative stress"/>
    <property type="evidence" value="ECO:0000250"/>
    <property type="project" value="UniProtKB"/>
</dbReference>
<dbReference type="GO" id="GO:0035865">
    <property type="term" value="P:cellular response to potassium ion"/>
    <property type="evidence" value="ECO:0000270"/>
    <property type="project" value="RGD"/>
</dbReference>
<dbReference type="GO" id="GO:1904639">
    <property type="term" value="P:cellular response to resveratrol"/>
    <property type="evidence" value="ECO:0000270"/>
    <property type="project" value="RGD"/>
</dbReference>
<dbReference type="GO" id="GO:0097067">
    <property type="term" value="P:cellular response to thyroid hormone stimulus"/>
    <property type="evidence" value="ECO:0000314"/>
    <property type="project" value="RGD"/>
</dbReference>
<dbReference type="GO" id="GO:0071560">
    <property type="term" value="P:cellular response to transforming growth factor beta stimulus"/>
    <property type="evidence" value="ECO:0000314"/>
    <property type="project" value="RGD"/>
</dbReference>
<dbReference type="GO" id="GO:0071356">
    <property type="term" value="P:cellular response to tumor necrosis factor"/>
    <property type="evidence" value="ECO:0000270"/>
    <property type="project" value="RGD"/>
</dbReference>
<dbReference type="GO" id="GO:0021549">
    <property type="term" value="P:cerebellum development"/>
    <property type="evidence" value="ECO:0000270"/>
    <property type="project" value="RGD"/>
</dbReference>
<dbReference type="GO" id="GO:0032922">
    <property type="term" value="P:circadian regulation of gene expression"/>
    <property type="evidence" value="ECO:0000250"/>
    <property type="project" value="UniProtKB"/>
</dbReference>
<dbReference type="GO" id="GO:0097009">
    <property type="term" value="P:energy homeostasis"/>
    <property type="evidence" value="ECO:0000250"/>
    <property type="project" value="UniProtKB"/>
</dbReference>
<dbReference type="GO" id="GO:0019395">
    <property type="term" value="P:fatty acid oxidation"/>
    <property type="evidence" value="ECO:0000270"/>
    <property type="project" value="RGD"/>
</dbReference>
<dbReference type="GO" id="GO:0051552">
    <property type="term" value="P:flavone metabolic process"/>
    <property type="evidence" value="ECO:0000270"/>
    <property type="project" value="RGD"/>
</dbReference>
<dbReference type="GO" id="GO:0030900">
    <property type="term" value="P:forebrain development"/>
    <property type="evidence" value="ECO:0000270"/>
    <property type="project" value="RGD"/>
</dbReference>
<dbReference type="GO" id="GO:0006012">
    <property type="term" value="P:galactose metabolic process"/>
    <property type="evidence" value="ECO:0000270"/>
    <property type="project" value="RGD"/>
</dbReference>
<dbReference type="GO" id="GO:0006094">
    <property type="term" value="P:gluconeogenesis"/>
    <property type="evidence" value="ECO:0000270"/>
    <property type="project" value="RGD"/>
</dbReference>
<dbReference type="GO" id="GO:0007005">
    <property type="term" value="P:mitochondrion organization"/>
    <property type="evidence" value="ECO:0000315"/>
    <property type="project" value="RGD"/>
</dbReference>
<dbReference type="GO" id="GO:0045820">
    <property type="term" value="P:negative regulation of glycolytic process"/>
    <property type="evidence" value="ECO:0000315"/>
    <property type="project" value="RGD"/>
</dbReference>
<dbReference type="GO" id="GO:0090258">
    <property type="term" value="P:negative regulation of mitochondrial fission"/>
    <property type="evidence" value="ECO:0000315"/>
    <property type="project" value="RGD"/>
</dbReference>
<dbReference type="GO" id="GO:0043524">
    <property type="term" value="P:negative regulation of neuron apoptotic process"/>
    <property type="evidence" value="ECO:0000250"/>
    <property type="project" value="UniProtKB"/>
</dbReference>
<dbReference type="GO" id="GO:0014912">
    <property type="term" value="P:negative regulation of smooth muscle cell migration"/>
    <property type="evidence" value="ECO:0000315"/>
    <property type="project" value="RGD"/>
</dbReference>
<dbReference type="GO" id="GO:0048662">
    <property type="term" value="P:negative regulation of smooth muscle cell proliferation"/>
    <property type="evidence" value="ECO:0000315"/>
    <property type="project" value="RGD"/>
</dbReference>
<dbReference type="GO" id="GO:0051402">
    <property type="term" value="P:neuron apoptotic process"/>
    <property type="evidence" value="ECO:0000266"/>
    <property type="project" value="RGD"/>
</dbReference>
<dbReference type="GO" id="GO:0120162">
    <property type="term" value="P:positive regulation of cold-induced thermogenesis"/>
    <property type="evidence" value="ECO:0000250"/>
    <property type="project" value="YuBioLab"/>
</dbReference>
<dbReference type="GO" id="GO:0045893">
    <property type="term" value="P:positive regulation of DNA-templated transcription"/>
    <property type="evidence" value="ECO:0000315"/>
    <property type="project" value="RGD"/>
</dbReference>
<dbReference type="GO" id="GO:0046321">
    <property type="term" value="P:positive regulation of fatty acid oxidation"/>
    <property type="evidence" value="ECO:0000315"/>
    <property type="project" value="RGD"/>
</dbReference>
<dbReference type="GO" id="GO:0010628">
    <property type="term" value="P:positive regulation of gene expression"/>
    <property type="evidence" value="ECO:0000266"/>
    <property type="project" value="RGD"/>
</dbReference>
<dbReference type="GO" id="GO:1904635">
    <property type="term" value="P:positive regulation of podocyte apoptotic process"/>
    <property type="evidence" value="ECO:0000315"/>
    <property type="project" value="RGD"/>
</dbReference>
<dbReference type="GO" id="GO:2000184">
    <property type="term" value="P:positive regulation of progesterone biosynthetic process"/>
    <property type="evidence" value="ECO:0000315"/>
    <property type="project" value="RGD"/>
</dbReference>
<dbReference type="GO" id="GO:0045944">
    <property type="term" value="P:positive regulation of transcription by RNA polymerase II"/>
    <property type="evidence" value="ECO:0000315"/>
    <property type="project" value="RGD"/>
</dbReference>
<dbReference type="GO" id="GO:1904707">
    <property type="term" value="P:positive regulation of vascular associated smooth muscle cell proliferation"/>
    <property type="evidence" value="ECO:0000315"/>
    <property type="project" value="RGD"/>
</dbReference>
<dbReference type="GO" id="GO:0042752">
    <property type="term" value="P:regulation of circadian rhythm"/>
    <property type="evidence" value="ECO:0000250"/>
    <property type="project" value="UniProtKB"/>
</dbReference>
<dbReference type="GO" id="GO:0006355">
    <property type="term" value="P:regulation of DNA-templated transcription"/>
    <property type="evidence" value="ECO:0000250"/>
    <property type="project" value="UniProtKB"/>
</dbReference>
<dbReference type="GO" id="GO:0022904">
    <property type="term" value="P:respiratory electron transport chain"/>
    <property type="evidence" value="ECO:0000250"/>
    <property type="project" value="UniProtKB"/>
</dbReference>
<dbReference type="GO" id="GO:0014823">
    <property type="term" value="P:response to activity"/>
    <property type="evidence" value="ECO:0000314"/>
    <property type="project" value="RGD"/>
</dbReference>
<dbReference type="GO" id="GO:1903494">
    <property type="term" value="P:response to dehydroepiandrosterone"/>
    <property type="evidence" value="ECO:0000270"/>
    <property type="project" value="RGD"/>
</dbReference>
<dbReference type="GO" id="GO:0002021">
    <property type="term" value="P:response to dietary excess"/>
    <property type="evidence" value="ECO:0000266"/>
    <property type="project" value="RGD"/>
</dbReference>
<dbReference type="GO" id="GO:0051602">
    <property type="term" value="P:response to electrical stimulus"/>
    <property type="evidence" value="ECO:0000270"/>
    <property type="project" value="RGD"/>
</dbReference>
<dbReference type="GO" id="GO:0014878">
    <property type="term" value="P:response to electrical stimulus involved in regulation of muscle adaptation"/>
    <property type="evidence" value="ECO:0000270"/>
    <property type="project" value="RGD"/>
</dbReference>
<dbReference type="GO" id="GO:0071871">
    <property type="term" value="P:response to epinephrine"/>
    <property type="evidence" value="ECO:0000270"/>
    <property type="project" value="RGD"/>
</dbReference>
<dbReference type="GO" id="GO:0009750">
    <property type="term" value="P:response to fructose"/>
    <property type="evidence" value="ECO:0000270"/>
    <property type="project" value="RGD"/>
</dbReference>
<dbReference type="GO" id="GO:1990910">
    <property type="term" value="P:response to hypobaric hypoxia"/>
    <property type="evidence" value="ECO:0000270"/>
    <property type="project" value="RGD"/>
</dbReference>
<dbReference type="GO" id="GO:0001666">
    <property type="term" value="P:response to hypoxia"/>
    <property type="evidence" value="ECO:0000270"/>
    <property type="project" value="RGD"/>
</dbReference>
<dbReference type="GO" id="GO:0002931">
    <property type="term" value="P:response to ischemia"/>
    <property type="evidence" value="ECO:0000270"/>
    <property type="project" value="RGD"/>
</dbReference>
<dbReference type="GO" id="GO:0043201">
    <property type="term" value="P:response to L-leucine"/>
    <property type="evidence" value="ECO:0000270"/>
    <property type="project" value="RGD"/>
</dbReference>
<dbReference type="GO" id="GO:1904640">
    <property type="term" value="P:response to methionine"/>
    <property type="evidence" value="ECO:0000270"/>
    <property type="project" value="RGD"/>
</dbReference>
<dbReference type="GO" id="GO:0043278">
    <property type="term" value="P:response to morphine"/>
    <property type="evidence" value="ECO:0000270"/>
    <property type="project" value="RGD"/>
</dbReference>
<dbReference type="GO" id="GO:0014850">
    <property type="term" value="P:response to muscle activity"/>
    <property type="evidence" value="ECO:0000270"/>
    <property type="project" value="RGD"/>
</dbReference>
<dbReference type="GO" id="GO:0071873">
    <property type="term" value="P:response to norepinephrine"/>
    <property type="evidence" value="ECO:0000270"/>
    <property type="project" value="RGD"/>
</dbReference>
<dbReference type="GO" id="GO:0007584">
    <property type="term" value="P:response to nutrient"/>
    <property type="evidence" value="ECO:0000270"/>
    <property type="project" value="RGD"/>
</dbReference>
<dbReference type="GO" id="GO:0031667">
    <property type="term" value="P:response to nutrient levels"/>
    <property type="evidence" value="ECO:0000270"/>
    <property type="project" value="RGD"/>
</dbReference>
<dbReference type="GO" id="GO:0000302">
    <property type="term" value="P:response to reactive oxygen species"/>
    <property type="evidence" value="ECO:0000270"/>
    <property type="project" value="RGD"/>
</dbReference>
<dbReference type="GO" id="GO:0042594">
    <property type="term" value="P:response to starvation"/>
    <property type="evidence" value="ECO:0000270"/>
    <property type="project" value="RGD"/>
</dbReference>
<dbReference type="GO" id="GO:0097066">
    <property type="term" value="P:response to thyroid hormone"/>
    <property type="evidence" value="ECO:0000270"/>
    <property type="project" value="RGD"/>
</dbReference>
<dbReference type="GO" id="GO:0009410">
    <property type="term" value="P:response to xenobiotic stimulus"/>
    <property type="evidence" value="ECO:0000270"/>
    <property type="project" value="RGD"/>
</dbReference>
<dbReference type="GO" id="GO:0014732">
    <property type="term" value="P:skeletal muscle atrophy"/>
    <property type="evidence" value="ECO:0000270"/>
    <property type="project" value="RGD"/>
</dbReference>
<dbReference type="CDD" id="cd12623">
    <property type="entry name" value="RRM_PPARGC1A"/>
    <property type="match status" value="1"/>
</dbReference>
<dbReference type="FunFam" id="3.30.70.330:FF:000184">
    <property type="entry name" value="Peroxisome proliferator-activated receptor gamma coactivator 1-alpha"/>
    <property type="match status" value="1"/>
</dbReference>
<dbReference type="Gene3D" id="3.30.70.330">
    <property type="match status" value="1"/>
</dbReference>
<dbReference type="InterPro" id="IPR012677">
    <property type="entry name" value="Nucleotide-bd_a/b_plait_sf"/>
</dbReference>
<dbReference type="InterPro" id="IPR034605">
    <property type="entry name" value="PGC-1"/>
</dbReference>
<dbReference type="InterPro" id="IPR034833">
    <property type="entry name" value="PPARGC1A_RRM"/>
</dbReference>
<dbReference type="InterPro" id="IPR035979">
    <property type="entry name" value="RBD_domain_sf"/>
</dbReference>
<dbReference type="InterPro" id="IPR000504">
    <property type="entry name" value="RRM_dom"/>
</dbReference>
<dbReference type="PANTHER" id="PTHR15528">
    <property type="entry name" value="PEROXISOME PROLIFERATOR ACTIVATED RECEPTOR GAMMA COACTIVATOR 1 PGC-1 -RELATED"/>
    <property type="match status" value="1"/>
</dbReference>
<dbReference type="PANTHER" id="PTHR15528:SF10">
    <property type="entry name" value="PEROXISOME PROLIFERATOR-ACTIVATED RECEPTOR GAMMA COACTIVATOR 1-ALPHA"/>
    <property type="match status" value="1"/>
</dbReference>
<dbReference type="Pfam" id="PF00076">
    <property type="entry name" value="RRM_1"/>
    <property type="match status" value="1"/>
</dbReference>
<dbReference type="SMART" id="SM00360">
    <property type="entry name" value="RRM"/>
    <property type="match status" value="1"/>
</dbReference>
<dbReference type="SUPFAM" id="SSF54928">
    <property type="entry name" value="RNA-binding domain, RBD"/>
    <property type="match status" value="1"/>
</dbReference>
<dbReference type="PROSITE" id="PS50102">
    <property type="entry name" value="RRM"/>
    <property type="match status" value="1"/>
</dbReference>
<reference key="1">
    <citation type="journal article" date="2000" name="Endocrinology">
        <title>Role of leptin in peroxisome proliferator-activated receptor gamma coactivator-1 expression.</title>
        <authorList>
            <person name="Kakuma T."/>
            <person name="Wang Z.-W."/>
            <person name="Pan W."/>
            <person name="Unger R.H."/>
            <person name="Zhou Y.-T."/>
        </authorList>
    </citation>
    <scope>NUCLEOTIDE SEQUENCE [MRNA]</scope>
    <scope>INDUCTION</scope>
    <source>
        <strain>Zucker</strain>
        <tissue>Heart</tissue>
    </source>
</reference>
<reference key="2">
    <citation type="journal article" date="2000" name="Biochem. Biophys. Res. Commun.">
        <title>cDNA cloning and mRNA analysis of PGC-1 in epitrochlearis muscle in swimming-exercised rats.</title>
        <authorList>
            <person name="Goto M."/>
            <person name="Terada S."/>
            <person name="Kato M."/>
            <person name="Katoh M."/>
            <person name="Yokozeki T."/>
            <person name="Tabata I."/>
            <person name="Shimokawa T."/>
        </authorList>
    </citation>
    <scope>NUCLEOTIDE SEQUENCE [MRNA]</scope>
    <scope>INDUCTION</scope>
</reference>
<reference key="3">
    <citation type="submission" date="2003-02" db="EMBL/GenBank/DDBJ databases">
        <title>Rattus norvegicus PGC1 mRNA.</title>
        <authorList>
            <person name="Kofman A.V."/>
        </authorList>
    </citation>
    <scope>NUCLEOTIDE SEQUENCE [MRNA]</scope>
</reference>
<keyword id="KW-0007">Acetylation</keyword>
<keyword id="KW-0010">Activator</keyword>
<keyword id="KW-0090">Biological rhythms</keyword>
<keyword id="KW-0539">Nucleus</keyword>
<keyword id="KW-0597">Phosphoprotein</keyword>
<keyword id="KW-1185">Reference proteome</keyword>
<keyword id="KW-0694">RNA-binding</keyword>
<keyword id="KW-0804">Transcription</keyword>
<keyword id="KW-0805">Transcription regulation</keyword>
<keyword id="KW-0832">Ubl conjugation</keyword>
<comment type="function">
    <text evidence="1 2">Transcriptional coactivator for steroid receptors and nuclear receptors. Greatly increases the transcriptional activity of PPARG and thyroid hormone receptor on the uncoupling protein promoter. Can regulate key mitochondrial genes that contribute to the program of adaptive thermogenesis. Plays an essential role in metabolic reprogramming in response to dietary availability through coordination of the expression of a wide array of genes involved in glucose and fatty acid metabolism. Acts as a key regulator of gluconeogenesis: stimulates hepatic gluconeogenesis by increasing the expression of gluconeogenic enzymes, and acting together with FOXO1 to promote the fasting gluconeogenic program (By similarity). Induces the expression of PERM1 in the skeletal muscle in an ESRRA-dependent manner. Also involved in the integration of the circadian rhythms and energy metabolism. Required for oscillatory expression of clock genes, such as BMAL1 and NR1D1, through the coactivation of RORA and RORC, and metabolic genes, such as PDK4 and PEPCK (By similarity).</text>
</comment>
<comment type="subunit">
    <text evidence="1 2">Homooligomer (By similarity). Interacts with MYBBP1A; inhibits MYBBP1A transcriptional activation. Interacts with PRDM16, LPIN1 and PML. Interacts (via LXXLL motif) with RORA and RORC (via AF-2 motif); activates RORA and RORC transcriptional activation (By similarity). Interacts with LRPPRC (By similarity). Interacts with FOXO1 (By similarity). Interacts with NR5A2 (By similarity).</text>
</comment>
<comment type="subcellular location">
    <subcellularLocation>
        <location evidence="1">Nucleus</location>
    </subcellularLocation>
    <subcellularLocation>
        <location evidence="1">Nucleus</location>
        <location evidence="1">PML body</location>
    </subcellularLocation>
</comment>
<comment type="induction">
    <text evidence="5 6">Up-regulated in brown adipose tissue of diabetic fatty (fa/fa) rats. Exposure of fa/fa rats to cold resulted in a much smaller increase as compared to lean rats in which a 2.6 fold increase was seen. Leptin is required for normal basal and cold-stimulated expression in brown adipose tissue and hyperleptinemia rapidly up-regulates its expression. It is induced not only by cold exposure but also by prolonged low-intensity physical exercise in epitrochlearis muscle.</text>
</comment>
<comment type="PTM">
    <text evidence="1">Phosphorylation by AMPK in skeletal muscle increases activation of its own promoter. Phosphorylated by CLK2.</text>
</comment>
<comment type="PTM">
    <text evidence="2">Heavily acetylated by KAT2A/GCN5 under conditions of high nutrients, leading to inactivation of PPARGC1A. Deacetylated by SIRT1 in low nutrients/high NAD conditions, leading to its activation.</text>
</comment>
<comment type="PTM">
    <text evidence="2">Ubiquitinated. Ubiquitination by RNF34 induces proteasomal degradation.</text>
</comment>
<organism>
    <name type="scientific">Rattus norvegicus</name>
    <name type="common">Rat</name>
    <dbReference type="NCBI Taxonomy" id="10116"/>
    <lineage>
        <taxon>Eukaryota</taxon>
        <taxon>Metazoa</taxon>
        <taxon>Chordata</taxon>
        <taxon>Craniata</taxon>
        <taxon>Vertebrata</taxon>
        <taxon>Euteleostomi</taxon>
        <taxon>Mammalia</taxon>
        <taxon>Eutheria</taxon>
        <taxon>Euarchontoglires</taxon>
        <taxon>Glires</taxon>
        <taxon>Rodentia</taxon>
        <taxon>Myomorpha</taxon>
        <taxon>Muroidea</taxon>
        <taxon>Muridae</taxon>
        <taxon>Murinae</taxon>
        <taxon>Rattus</taxon>
    </lineage>
</organism>
<gene>
    <name type="primary">Ppargc1a</name>
    <name type="synonym">Pgc1</name>
    <name type="synonym">Pgc1a</name>
    <name type="synonym">Ppargc1</name>
</gene>
<name>PRGC1_RAT</name>
<protein>
    <recommendedName>
        <fullName>Peroxisome proliferator-activated receptor gamma coactivator 1-alpha</fullName>
        <shortName>PGC-1-alpha</shortName>
        <shortName>PPAR-gamma coactivator 1-alpha</shortName>
        <shortName>PPARGC-1-alpha</shortName>
    </recommendedName>
</protein>
<accession>Q9QYK2</accession>
<feature type="chain" id="PRO_0000081735" description="Peroxisome proliferator-activated receptor gamma coactivator 1-alpha">
    <location>
        <begin position="1"/>
        <end position="796"/>
    </location>
</feature>
<feature type="domain" description="RRM" evidence="3">
    <location>
        <begin position="675"/>
        <end position="751"/>
    </location>
</feature>
<feature type="region of interest" description="Disordered" evidence="4">
    <location>
        <begin position="98"/>
        <end position="138"/>
    </location>
</feature>
<feature type="region of interest" description="Disordered" evidence="4">
    <location>
        <begin position="211"/>
        <end position="275"/>
    </location>
</feature>
<feature type="region of interest" description="Disordered" evidence="4">
    <location>
        <begin position="288"/>
        <end position="350"/>
    </location>
</feature>
<feature type="region of interest" description="Interaction with PPARG" evidence="2">
    <location>
        <begin position="291"/>
        <end position="337"/>
    </location>
</feature>
<feature type="region of interest" description="Mediates interaction with RNF34" evidence="2">
    <location>
        <begin position="348"/>
        <end position="796"/>
    </location>
</feature>
<feature type="region of interest" description="Disordered" evidence="4">
    <location>
        <begin position="541"/>
        <end position="597"/>
    </location>
</feature>
<feature type="region of interest" description="Disordered" evidence="4">
    <location>
        <begin position="611"/>
        <end position="669"/>
    </location>
</feature>
<feature type="short sequence motif" description="LXXLL motif">
    <location>
        <begin position="142"/>
        <end position="146"/>
    </location>
</feature>
<feature type="compositionally biased region" description="Polar residues" evidence="4">
    <location>
        <begin position="114"/>
        <end position="127"/>
    </location>
</feature>
<feature type="compositionally biased region" description="Basic and acidic residues" evidence="4">
    <location>
        <begin position="217"/>
        <end position="235"/>
    </location>
</feature>
<feature type="compositionally biased region" description="Polar residues" evidence="4">
    <location>
        <begin position="242"/>
        <end position="258"/>
    </location>
</feature>
<feature type="compositionally biased region" description="Basic residues" evidence="4">
    <location>
        <begin position="561"/>
        <end position="576"/>
    </location>
</feature>
<feature type="compositionally biased region" description="Low complexity" evidence="4">
    <location>
        <begin position="577"/>
        <end position="597"/>
    </location>
</feature>
<feature type="compositionally biased region" description="Basic residues" evidence="4">
    <location>
        <begin position="620"/>
        <end position="629"/>
    </location>
</feature>
<feature type="compositionally biased region" description="Basic and acidic residues" evidence="4">
    <location>
        <begin position="630"/>
        <end position="669"/>
    </location>
</feature>
<feature type="modified residue" description="N6-acetyllysine" evidence="1">
    <location>
        <position position="77"/>
    </location>
</feature>
<feature type="modified residue" description="N6-acetyllysine" evidence="1">
    <location>
        <position position="144"/>
    </location>
</feature>
<feature type="modified residue" description="Phosphothreonine; by AMPK" evidence="1">
    <location>
        <position position="176"/>
    </location>
</feature>
<feature type="modified residue" description="N6-acetyllysine" evidence="1">
    <location>
        <position position="182"/>
    </location>
</feature>
<feature type="modified residue" description="N6-acetyllysine" evidence="1">
    <location>
        <position position="252"/>
    </location>
</feature>
<feature type="modified residue" description="N6-acetyllysine" evidence="1">
    <location>
        <position position="269"/>
    </location>
</feature>
<feature type="modified residue" description="N6-acetyllysine" evidence="1">
    <location>
        <position position="276"/>
    </location>
</feature>
<feature type="modified residue" description="N6-acetyllysine" evidence="1">
    <location>
        <position position="319"/>
    </location>
</feature>
<feature type="modified residue" description="N6-acetyllysine" evidence="1">
    <location>
        <position position="345"/>
    </location>
</feature>
<feature type="modified residue" description="N6-acetyllysine" evidence="1">
    <location>
        <position position="411"/>
    </location>
</feature>
<feature type="modified residue" description="N6-acetyllysine" evidence="1">
    <location>
        <position position="440"/>
    </location>
</feature>
<feature type="modified residue" description="N6-acetyllysine" evidence="1">
    <location>
        <position position="449"/>
    </location>
</feature>
<feature type="modified residue" description="Phosphoserine; by AMPK" evidence="1">
    <location>
        <position position="537"/>
    </location>
</feature>
<feature type="modified residue" description="N6-acetyllysine" evidence="1">
    <location>
        <position position="756"/>
    </location>
</feature>
<feature type="modified residue" description="N6-acetyllysine" evidence="1">
    <location>
        <position position="777"/>
    </location>
</feature>
<feature type="sequence conflict" description="In Ref. 2." evidence="7" ref="2">
    <original>S</original>
    <variation>L</variation>
    <location>
        <position position="427"/>
    </location>
</feature>
<feature type="sequence conflict" description="In Ref. 2." evidence="7" ref="2">
    <original>R</original>
    <variation>H</variation>
    <location>
        <position position="564"/>
    </location>
</feature>